<proteinExistence type="inferred from homology"/>
<feature type="chain" id="PRO_0000405242" description="Chaperone protein htpG">
    <location>
        <begin position="1"/>
        <end position="681"/>
    </location>
</feature>
<feature type="region of interest" description="A; substrate-binding" evidence="1">
    <location>
        <begin position="1"/>
        <end position="326"/>
    </location>
</feature>
<feature type="region of interest" description="B" evidence="1">
    <location>
        <begin position="327"/>
        <end position="545"/>
    </location>
</feature>
<feature type="region of interest" description="C" evidence="1">
    <location>
        <begin position="546"/>
        <end position="681"/>
    </location>
</feature>
<feature type="region of interest" description="Disordered" evidence="2">
    <location>
        <begin position="601"/>
        <end position="620"/>
    </location>
</feature>
<gene>
    <name evidence="1" type="primary">htpG</name>
    <name type="ordered locus">BF638R_2451</name>
</gene>
<organism>
    <name type="scientific">Bacteroides fragilis (strain 638R)</name>
    <dbReference type="NCBI Taxonomy" id="862962"/>
    <lineage>
        <taxon>Bacteria</taxon>
        <taxon>Pseudomonadati</taxon>
        <taxon>Bacteroidota</taxon>
        <taxon>Bacteroidia</taxon>
        <taxon>Bacteroidales</taxon>
        <taxon>Bacteroidaceae</taxon>
        <taxon>Bacteroides</taxon>
    </lineage>
</organism>
<protein>
    <recommendedName>
        <fullName>Chaperone protein htpG</fullName>
    </recommendedName>
    <alternativeName>
        <fullName>Heat shock protein htpG</fullName>
    </alternativeName>
    <alternativeName>
        <fullName evidence="1">High temperature protein G</fullName>
    </alternativeName>
</protein>
<keyword id="KW-0067">ATP-binding</keyword>
<keyword id="KW-0143">Chaperone</keyword>
<keyword id="KW-0963">Cytoplasm</keyword>
<keyword id="KW-0547">Nucleotide-binding</keyword>
<keyword id="KW-0346">Stress response</keyword>
<name>HTPG_BACF6</name>
<evidence type="ECO:0000255" key="1">
    <source>
        <dbReference type="HAMAP-Rule" id="MF_00505"/>
    </source>
</evidence>
<evidence type="ECO:0000256" key="2">
    <source>
        <dbReference type="SAM" id="MobiDB-lite"/>
    </source>
</evidence>
<accession>E1WNR6</accession>
<accession>P58476</accession>
<accession>Q64TM1</accession>
<reference key="1">
    <citation type="journal article" date="2002" name="J. Bacteriol.">
        <title>Aerobic-type ribonucleotide reductase in the anaerobe Bacteroides fragilis.</title>
        <authorList>
            <person name="Smalley D."/>
            <person name="Rocha E.R."/>
            <person name="Smith C.J."/>
        </authorList>
    </citation>
    <scope>NUCLEOTIDE SEQUENCE [GENOMIC DNA]</scope>
    <source>
        <strain>638R</strain>
    </source>
</reference>
<reference key="2">
    <citation type="journal article" date="2010" name="Microbiology">
        <title>Twenty-eight divergent polysaccharide loci specifying within- and amongst-strain capsule diversity in three strains of Bacteroides fragilis.</title>
        <authorList>
            <person name="Patrick S."/>
            <person name="Blakely G.W."/>
            <person name="Houston S."/>
            <person name="Moore J."/>
            <person name="Abratt V.R."/>
            <person name="Bertalan M."/>
            <person name="Cerdeno-Tarraga A.M."/>
            <person name="Quail M.A."/>
            <person name="Corton N."/>
            <person name="Corton C."/>
            <person name="Bignell A."/>
            <person name="Barron A."/>
            <person name="Clark L."/>
            <person name="Bentley S.D."/>
            <person name="Parkhill J."/>
        </authorList>
    </citation>
    <scope>NUCLEOTIDE SEQUENCE [LARGE SCALE GENOMIC DNA]</scope>
    <source>
        <strain>638R</strain>
    </source>
</reference>
<comment type="function">
    <text evidence="1">Molecular chaperone. Has ATPase activity.</text>
</comment>
<comment type="subunit">
    <text evidence="1">Homodimer.</text>
</comment>
<comment type="subcellular location">
    <subcellularLocation>
        <location evidence="1">Cytoplasm</location>
    </subcellularLocation>
</comment>
<comment type="similarity">
    <text evidence="1">Belongs to the heat shock protein 90 family.</text>
</comment>
<sequence>MQKGNIGVTTENIFPIIKKFLYSDHEIFLRELVSNAVDATQKLNTLASISEFKGELGDLTVHVSLGKDTITISDRGIGLTAEEIDKYINQIAFSGANDFLEKYKNDANAIIGHFGLGFYSAFMVSKKVEIITKSYKEGAQAVKWTCDGSPEFTLEEVEKADRGTDIVLYIDDDCKEFLEESRISALLKKYCSFLPVPIAFGKKKEWKDGKQVETAEDNVINDTIPLWTKKPSELSDEDYKKFYRELYPMSDEPLFWIHLNVDYPFHLTGILYFPKVKSNIDLNKNKIQLYCNQVYVTDSVEGIVPDFLTLLHGVLDSPDIPLNVSRSYLQSDSNVKKISTYISKKVSDRLQSIFKNDRAQFEEKWNDLKIFINYGMLTQEDFYDKAQKFALFTDTDGKHYTFEEYQTLIKDNQTDKDKNLIYLYANNKDEQFAYIEAAKNKGYNVLLMDGQLDVAMVSMLEQKLEKSRFTRVDSDVVDNLIVKEDKKSDVLEASKQEALSAAFKSQLPKMEKVEFNVMIQALGENGSPVMITQSEYMRRMKEMANIQAGMSFYGEMPDMFNLVLNSDHKLVKEVLADEEKECSAAIAPIQTELEDVTKRRDALKKKQEGKKDEDIPTAEKDELNDLDKKWDELKQQKDSIFAGYAGKNKVVRQLIDLALLQNNMLKGEALNNFVKRSIELI</sequence>
<dbReference type="EMBL" id="AF404759">
    <property type="protein sequence ID" value="AAL02103.1"/>
    <property type="molecule type" value="Genomic_DNA"/>
</dbReference>
<dbReference type="EMBL" id="FQ312004">
    <property type="protein sequence ID" value="CBW22960.1"/>
    <property type="molecule type" value="Genomic_DNA"/>
</dbReference>
<dbReference type="RefSeq" id="WP_008768895.1">
    <property type="nucleotide sequence ID" value="NC_016776.1"/>
</dbReference>
<dbReference type="SMR" id="E1WNR6"/>
<dbReference type="KEGG" id="bfg:BF638R_2451"/>
<dbReference type="PATRIC" id="fig|862962.3.peg.2508"/>
<dbReference type="HOGENOM" id="CLU_006684_3_2_10"/>
<dbReference type="Proteomes" id="UP000008560">
    <property type="component" value="Chromosome"/>
</dbReference>
<dbReference type="GO" id="GO:0005737">
    <property type="term" value="C:cytoplasm"/>
    <property type="evidence" value="ECO:0007669"/>
    <property type="project" value="UniProtKB-SubCell"/>
</dbReference>
<dbReference type="GO" id="GO:0005524">
    <property type="term" value="F:ATP binding"/>
    <property type="evidence" value="ECO:0007669"/>
    <property type="project" value="UniProtKB-UniRule"/>
</dbReference>
<dbReference type="GO" id="GO:0016887">
    <property type="term" value="F:ATP hydrolysis activity"/>
    <property type="evidence" value="ECO:0007669"/>
    <property type="project" value="InterPro"/>
</dbReference>
<dbReference type="GO" id="GO:0140662">
    <property type="term" value="F:ATP-dependent protein folding chaperone"/>
    <property type="evidence" value="ECO:0007669"/>
    <property type="project" value="InterPro"/>
</dbReference>
<dbReference type="GO" id="GO:0051082">
    <property type="term" value="F:unfolded protein binding"/>
    <property type="evidence" value="ECO:0007669"/>
    <property type="project" value="UniProtKB-UniRule"/>
</dbReference>
<dbReference type="CDD" id="cd16927">
    <property type="entry name" value="HATPase_Hsp90-like"/>
    <property type="match status" value="1"/>
</dbReference>
<dbReference type="FunFam" id="3.40.50.11260:FF:000009">
    <property type="entry name" value="Chaperone protein HtpG"/>
    <property type="match status" value="1"/>
</dbReference>
<dbReference type="FunFam" id="3.30.230.80:FF:000008">
    <property type="entry name" value="Molecular chaperone HtpG"/>
    <property type="match status" value="1"/>
</dbReference>
<dbReference type="FunFam" id="3.30.565.10:FF:000076">
    <property type="entry name" value="Molecular chaperone HtpG"/>
    <property type="match status" value="1"/>
</dbReference>
<dbReference type="Gene3D" id="3.30.230.80">
    <property type="match status" value="1"/>
</dbReference>
<dbReference type="Gene3D" id="3.40.50.11260">
    <property type="match status" value="1"/>
</dbReference>
<dbReference type="Gene3D" id="1.20.120.790">
    <property type="entry name" value="Heat shock protein 90, C-terminal domain"/>
    <property type="match status" value="1"/>
</dbReference>
<dbReference type="Gene3D" id="3.30.565.10">
    <property type="entry name" value="Histidine kinase-like ATPase, C-terminal domain"/>
    <property type="match status" value="1"/>
</dbReference>
<dbReference type="HAMAP" id="MF_00505">
    <property type="entry name" value="HSP90"/>
    <property type="match status" value="1"/>
</dbReference>
<dbReference type="InterPro" id="IPR036890">
    <property type="entry name" value="HATPase_C_sf"/>
</dbReference>
<dbReference type="InterPro" id="IPR019805">
    <property type="entry name" value="Heat_shock_protein_90_CS"/>
</dbReference>
<dbReference type="InterPro" id="IPR037196">
    <property type="entry name" value="HSP90_C"/>
</dbReference>
<dbReference type="InterPro" id="IPR001404">
    <property type="entry name" value="Hsp90_fam"/>
</dbReference>
<dbReference type="InterPro" id="IPR020575">
    <property type="entry name" value="Hsp90_N"/>
</dbReference>
<dbReference type="InterPro" id="IPR020568">
    <property type="entry name" value="Ribosomal_Su5_D2-typ_SF"/>
</dbReference>
<dbReference type="NCBIfam" id="NF003555">
    <property type="entry name" value="PRK05218.1"/>
    <property type="match status" value="1"/>
</dbReference>
<dbReference type="PANTHER" id="PTHR11528">
    <property type="entry name" value="HEAT SHOCK PROTEIN 90 FAMILY MEMBER"/>
    <property type="match status" value="1"/>
</dbReference>
<dbReference type="Pfam" id="PF13589">
    <property type="entry name" value="HATPase_c_3"/>
    <property type="match status" value="1"/>
</dbReference>
<dbReference type="Pfam" id="PF00183">
    <property type="entry name" value="HSP90"/>
    <property type="match status" value="1"/>
</dbReference>
<dbReference type="PIRSF" id="PIRSF002583">
    <property type="entry name" value="Hsp90"/>
    <property type="match status" value="1"/>
</dbReference>
<dbReference type="PRINTS" id="PR00775">
    <property type="entry name" value="HEATSHOCK90"/>
</dbReference>
<dbReference type="SUPFAM" id="SSF55874">
    <property type="entry name" value="ATPase domain of HSP90 chaperone/DNA topoisomerase II/histidine kinase"/>
    <property type="match status" value="1"/>
</dbReference>
<dbReference type="SUPFAM" id="SSF54211">
    <property type="entry name" value="Ribosomal protein S5 domain 2-like"/>
    <property type="match status" value="1"/>
</dbReference>
<dbReference type="PROSITE" id="PS00298">
    <property type="entry name" value="HSP90"/>
    <property type="match status" value="1"/>
</dbReference>